<feature type="chain" id="PRO_1000200794" description="Multidrug resistance protein MdtH">
    <location>
        <begin position="1"/>
        <end position="402"/>
    </location>
</feature>
<feature type="topological domain" description="Cytoplasmic" evidence="1">
    <location>
        <begin position="1"/>
        <end position="12"/>
    </location>
</feature>
<feature type="transmembrane region" description="Helical" evidence="1">
    <location>
        <begin position="13"/>
        <end position="33"/>
    </location>
</feature>
<feature type="topological domain" description="Periplasmic" evidence="1">
    <location>
        <begin position="34"/>
        <end position="98"/>
    </location>
</feature>
<feature type="transmembrane region" description="Helical" evidence="1">
    <location>
        <begin position="99"/>
        <end position="116"/>
    </location>
</feature>
<feature type="topological domain" description="Cytoplasmic" evidence="1">
    <location>
        <begin position="117"/>
        <end position="138"/>
    </location>
</feature>
<feature type="transmembrane region" description="Helical" evidence="1">
    <location>
        <begin position="139"/>
        <end position="159"/>
    </location>
</feature>
<feature type="topological domain" description="Periplasmic" evidence="1">
    <location>
        <begin position="160"/>
        <end position="164"/>
    </location>
</feature>
<feature type="transmembrane region" description="Helical" evidence="1">
    <location>
        <begin position="165"/>
        <end position="185"/>
    </location>
</feature>
<feature type="topological domain" description="Cytoplasmic" evidence="1">
    <location>
        <begin position="186"/>
        <end position="213"/>
    </location>
</feature>
<feature type="transmembrane region" description="Helical" evidence="1">
    <location>
        <begin position="214"/>
        <end position="234"/>
    </location>
</feature>
<feature type="topological domain" description="Periplasmic" evidence="1">
    <location>
        <begin position="235"/>
        <end position="243"/>
    </location>
</feature>
<feature type="transmembrane region" description="Helical" evidence="1">
    <location>
        <begin position="244"/>
        <end position="264"/>
    </location>
</feature>
<feature type="topological domain" description="Cytoplasmic" evidence="1">
    <location>
        <begin position="265"/>
        <end position="276"/>
    </location>
</feature>
<feature type="transmembrane region" description="Helical" evidence="1">
    <location>
        <begin position="277"/>
        <end position="297"/>
    </location>
</feature>
<feature type="topological domain" description="Periplasmic" evidence="1">
    <location>
        <begin position="298"/>
        <end position="299"/>
    </location>
</feature>
<feature type="transmembrane region" description="Helical" evidence="1">
    <location>
        <begin position="300"/>
        <end position="320"/>
    </location>
</feature>
<feature type="topological domain" description="Cytoplasmic" evidence="1">
    <location>
        <begin position="321"/>
        <end position="339"/>
    </location>
</feature>
<feature type="transmembrane region" description="Helical" evidence="1">
    <location>
        <begin position="340"/>
        <end position="360"/>
    </location>
</feature>
<feature type="topological domain" description="Periplasmic" evidence="1">
    <location>
        <begin position="361"/>
        <end position="367"/>
    </location>
</feature>
<feature type="transmembrane region" description="Helical" evidence="1">
    <location>
        <begin position="368"/>
        <end position="388"/>
    </location>
</feature>
<feature type="topological domain" description="Cytoplasmic" evidence="1">
    <location>
        <begin position="389"/>
        <end position="402"/>
    </location>
</feature>
<proteinExistence type="inferred from homology"/>
<keyword id="KW-0046">Antibiotic resistance</keyword>
<keyword id="KW-0997">Cell inner membrane</keyword>
<keyword id="KW-1003">Cell membrane</keyword>
<keyword id="KW-0472">Membrane</keyword>
<keyword id="KW-0812">Transmembrane</keyword>
<keyword id="KW-1133">Transmembrane helix</keyword>
<keyword id="KW-0813">Transport</keyword>
<name>MDTH_ECODH</name>
<organism>
    <name type="scientific">Escherichia coli (strain K12 / DH10B)</name>
    <dbReference type="NCBI Taxonomy" id="316385"/>
    <lineage>
        <taxon>Bacteria</taxon>
        <taxon>Pseudomonadati</taxon>
        <taxon>Pseudomonadota</taxon>
        <taxon>Gammaproteobacteria</taxon>
        <taxon>Enterobacterales</taxon>
        <taxon>Enterobacteriaceae</taxon>
        <taxon>Escherichia</taxon>
    </lineage>
</organism>
<evidence type="ECO:0000255" key="1">
    <source>
        <dbReference type="HAMAP-Rule" id="MF_01529"/>
    </source>
</evidence>
<comment type="function">
    <text evidence="1">Confers resistance to norfloxacin and enoxacin.</text>
</comment>
<comment type="subcellular location">
    <subcellularLocation>
        <location evidence="1">Cell inner membrane</location>
        <topology evidence="1">Multi-pass membrane protein</topology>
    </subcellularLocation>
</comment>
<comment type="similarity">
    <text evidence="1">Belongs to the major facilitator superfamily. DHA1 family. MdtH (TC 2.A.1.2.21) subfamily.</text>
</comment>
<protein>
    <recommendedName>
        <fullName evidence="1">Multidrug resistance protein MdtH</fullName>
    </recommendedName>
</protein>
<reference key="1">
    <citation type="journal article" date="2008" name="J. Bacteriol.">
        <title>The complete genome sequence of Escherichia coli DH10B: insights into the biology of a laboratory workhorse.</title>
        <authorList>
            <person name="Durfee T."/>
            <person name="Nelson R."/>
            <person name="Baldwin S."/>
            <person name="Plunkett G. III"/>
            <person name="Burland V."/>
            <person name="Mau B."/>
            <person name="Petrosino J.F."/>
            <person name="Qin X."/>
            <person name="Muzny D.M."/>
            <person name="Ayele M."/>
            <person name="Gibbs R.A."/>
            <person name="Csorgo B."/>
            <person name="Posfai G."/>
            <person name="Weinstock G.M."/>
            <person name="Blattner F.R."/>
        </authorList>
    </citation>
    <scope>NUCLEOTIDE SEQUENCE [LARGE SCALE GENOMIC DNA]</scope>
    <source>
        <strain>K12 / DH10B</strain>
    </source>
</reference>
<gene>
    <name evidence="1" type="primary">mdtH</name>
    <name type="ordered locus">ECDH10B_1136</name>
</gene>
<accession>B1X9H8</accession>
<sequence>MSRVSQARNLGKYFLLIDNMLVVLGFFVVFPLISIRFVDQMGWAAVMVGIALGLRQFIQQGLGIFGGAIADRFGAKPMIVTGMLMRAAGFATMGIAHEPWLLWFSCLLSGLGGTLFDPPRSALVVKLIRPQQRGRFFSLLMMQDSAGAVIGALLGSWLLQYDFRLVCATGAVLFVLCAAFNAWLLPAWKLSTVRTPVREGMTRVMRDKRFVTYVLTLAGYYMLAVQVMLMLPIMVNDVAGAPSAVKWMYAIEACLSLTLLYPIARWSEKHFRLEHRLMAGLLIMSLSMMPVGMVSGLQQLFTLICLFYIGSIIAEPARETLSASLADARARGSYMGFSRLGLAIGGAIGYIGGGWLFDLGKSAHQPELPWMMLGIIGIFTFLALGWQFSQKRAARRLLERDA</sequence>
<dbReference type="EMBL" id="CP000948">
    <property type="protein sequence ID" value="ACB02258.1"/>
    <property type="molecule type" value="Genomic_DNA"/>
</dbReference>
<dbReference type="RefSeq" id="WP_000092206.1">
    <property type="nucleotide sequence ID" value="NC_010473.1"/>
</dbReference>
<dbReference type="SMR" id="B1X9H8"/>
<dbReference type="GeneID" id="75203652"/>
<dbReference type="KEGG" id="ecd:ECDH10B_1136"/>
<dbReference type="HOGENOM" id="CLU_001265_60_2_6"/>
<dbReference type="GO" id="GO:0005886">
    <property type="term" value="C:plasma membrane"/>
    <property type="evidence" value="ECO:0007669"/>
    <property type="project" value="UniProtKB-SubCell"/>
</dbReference>
<dbReference type="GO" id="GO:0022857">
    <property type="term" value="F:transmembrane transporter activity"/>
    <property type="evidence" value="ECO:0007669"/>
    <property type="project" value="UniProtKB-UniRule"/>
</dbReference>
<dbReference type="GO" id="GO:0046677">
    <property type="term" value="P:response to antibiotic"/>
    <property type="evidence" value="ECO:0007669"/>
    <property type="project" value="UniProtKB-KW"/>
</dbReference>
<dbReference type="CDD" id="cd17329">
    <property type="entry name" value="MFS_MdtH_MDR_like"/>
    <property type="match status" value="1"/>
</dbReference>
<dbReference type="FunFam" id="1.20.1250.20:FF:000039">
    <property type="entry name" value="Multidrug resistance protein MdtH"/>
    <property type="match status" value="1"/>
</dbReference>
<dbReference type="Gene3D" id="1.20.1250.20">
    <property type="entry name" value="MFS general substrate transporter like domains"/>
    <property type="match status" value="1"/>
</dbReference>
<dbReference type="HAMAP" id="MF_01529">
    <property type="entry name" value="MFS_MdtH"/>
    <property type="match status" value="1"/>
</dbReference>
<dbReference type="InterPro" id="IPR011701">
    <property type="entry name" value="MFS"/>
</dbReference>
<dbReference type="InterPro" id="IPR020846">
    <property type="entry name" value="MFS_dom"/>
</dbReference>
<dbReference type="InterPro" id="IPR036259">
    <property type="entry name" value="MFS_trans_sf"/>
</dbReference>
<dbReference type="InterPro" id="IPR050171">
    <property type="entry name" value="MFS_Transporters"/>
</dbReference>
<dbReference type="InterPro" id="IPR022855">
    <property type="entry name" value="Multidrug-R_MdtH"/>
</dbReference>
<dbReference type="NCBIfam" id="NF008650">
    <property type="entry name" value="PRK11646.1"/>
    <property type="match status" value="1"/>
</dbReference>
<dbReference type="PANTHER" id="PTHR23517:SF2">
    <property type="entry name" value="MULTIDRUG RESISTANCE PROTEIN MDTH"/>
    <property type="match status" value="1"/>
</dbReference>
<dbReference type="PANTHER" id="PTHR23517">
    <property type="entry name" value="RESISTANCE PROTEIN MDTM, PUTATIVE-RELATED-RELATED"/>
    <property type="match status" value="1"/>
</dbReference>
<dbReference type="Pfam" id="PF07690">
    <property type="entry name" value="MFS_1"/>
    <property type="match status" value="1"/>
</dbReference>
<dbReference type="SUPFAM" id="SSF103473">
    <property type="entry name" value="MFS general substrate transporter"/>
    <property type="match status" value="1"/>
</dbReference>
<dbReference type="PROSITE" id="PS50850">
    <property type="entry name" value="MFS"/>
    <property type="match status" value="1"/>
</dbReference>